<proteinExistence type="inferred from homology"/>
<accession>Q21CL3</accession>
<feature type="chain" id="PRO_1000062506" description="Protein-export protein SecB">
    <location>
        <begin position="1"/>
        <end position="164"/>
    </location>
</feature>
<organism>
    <name type="scientific">Rhodopseudomonas palustris (strain BisB18)</name>
    <dbReference type="NCBI Taxonomy" id="316056"/>
    <lineage>
        <taxon>Bacteria</taxon>
        <taxon>Pseudomonadati</taxon>
        <taxon>Pseudomonadota</taxon>
        <taxon>Alphaproteobacteria</taxon>
        <taxon>Hyphomicrobiales</taxon>
        <taxon>Nitrobacteraceae</taxon>
        <taxon>Rhodopseudomonas</taxon>
    </lineage>
</organism>
<comment type="function">
    <text evidence="1">One of the proteins required for the normal export of preproteins out of the cell cytoplasm. It is a molecular chaperone that binds to a subset of precursor proteins, maintaining them in a translocation-competent state. It also specifically binds to its receptor SecA.</text>
</comment>
<comment type="subunit">
    <text evidence="1">Homotetramer, a dimer of dimers. One homotetramer interacts with 1 SecA dimer.</text>
</comment>
<comment type="subcellular location">
    <subcellularLocation>
        <location evidence="1">Cytoplasm</location>
    </subcellularLocation>
</comment>
<comment type="similarity">
    <text evidence="1">Belongs to the SecB family.</text>
</comment>
<protein>
    <recommendedName>
        <fullName evidence="1">Protein-export protein SecB</fullName>
    </recommendedName>
</protein>
<dbReference type="EMBL" id="CP000301">
    <property type="protein sequence ID" value="ABD85873.1"/>
    <property type="molecule type" value="Genomic_DNA"/>
</dbReference>
<dbReference type="SMR" id="Q21CL3"/>
<dbReference type="STRING" id="316056.RPC_0298"/>
<dbReference type="KEGG" id="rpc:RPC_0298"/>
<dbReference type="eggNOG" id="COG1952">
    <property type="taxonomic scope" value="Bacteria"/>
</dbReference>
<dbReference type="HOGENOM" id="CLU_111574_0_0_5"/>
<dbReference type="OrthoDB" id="9795145at2"/>
<dbReference type="GO" id="GO:0005737">
    <property type="term" value="C:cytoplasm"/>
    <property type="evidence" value="ECO:0007669"/>
    <property type="project" value="UniProtKB-SubCell"/>
</dbReference>
<dbReference type="GO" id="GO:0051082">
    <property type="term" value="F:unfolded protein binding"/>
    <property type="evidence" value="ECO:0007669"/>
    <property type="project" value="InterPro"/>
</dbReference>
<dbReference type="GO" id="GO:0006457">
    <property type="term" value="P:protein folding"/>
    <property type="evidence" value="ECO:0007669"/>
    <property type="project" value="UniProtKB-UniRule"/>
</dbReference>
<dbReference type="GO" id="GO:0051262">
    <property type="term" value="P:protein tetramerization"/>
    <property type="evidence" value="ECO:0007669"/>
    <property type="project" value="InterPro"/>
</dbReference>
<dbReference type="GO" id="GO:0015031">
    <property type="term" value="P:protein transport"/>
    <property type="evidence" value="ECO:0007669"/>
    <property type="project" value="UniProtKB-UniRule"/>
</dbReference>
<dbReference type="Gene3D" id="3.10.420.10">
    <property type="entry name" value="SecB-like"/>
    <property type="match status" value="1"/>
</dbReference>
<dbReference type="HAMAP" id="MF_00821">
    <property type="entry name" value="SecB"/>
    <property type="match status" value="1"/>
</dbReference>
<dbReference type="InterPro" id="IPR003708">
    <property type="entry name" value="SecB"/>
</dbReference>
<dbReference type="InterPro" id="IPR035958">
    <property type="entry name" value="SecB-like_sf"/>
</dbReference>
<dbReference type="NCBIfam" id="NF004392">
    <property type="entry name" value="PRK05751.1-3"/>
    <property type="match status" value="1"/>
</dbReference>
<dbReference type="NCBIfam" id="TIGR00809">
    <property type="entry name" value="secB"/>
    <property type="match status" value="1"/>
</dbReference>
<dbReference type="PANTHER" id="PTHR36918">
    <property type="match status" value="1"/>
</dbReference>
<dbReference type="PANTHER" id="PTHR36918:SF1">
    <property type="entry name" value="PROTEIN-EXPORT PROTEIN SECB"/>
    <property type="match status" value="1"/>
</dbReference>
<dbReference type="Pfam" id="PF02556">
    <property type="entry name" value="SecB"/>
    <property type="match status" value="1"/>
</dbReference>
<dbReference type="PRINTS" id="PR01594">
    <property type="entry name" value="SECBCHAPRONE"/>
</dbReference>
<dbReference type="SUPFAM" id="SSF54611">
    <property type="entry name" value="SecB-like"/>
    <property type="match status" value="1"/>
</dbReference>
<gene>
    <name evidence="1" type="primary">secB</name>
    <name type="ordered locus">RPC_0298</name>
</gene>
<reference key="1">
    <citation type="submission" date="2006-03" db="EMBL/GenBank/DDBJ databases">
        <title>Complete sequence of Rhodopseudomonas palustris BisB18.</title>
        <authorList>
            <consortium name="US DOE Joint Genome Institute"/>
            <person name="Copeland A."/>
            <person name="Lucas S."/>
            <person name="Lapidus A."/>
            <person name="Barry K."/>
            <person name="Detter J.C."/>
            <person name="Glavina del Rio T."/>
            <person name="Hammon N."/>
            <person name="Israni S."/>
            <person name="Dalin E."/>
            <person name="Tice H."/>
            <person name="Pitluck S."/>
            <person name="Chain P."/>
            <person name="Malfatti S."/>
            <person name="Shin M."/>
            <person name="Vergez L."/>
            <person name="Schmutz J."/>
            <person name="Larimer F."/>
            <person name="Land M."/>
            <person name="Hauser L."/>
            <person name="Pelletier D.A."/>
            <person name="Kyrpides N."/>
            <person name="Anderson I."/>
            <person name="Oda Y."/>
            <person name="Harwood C.S."/>
            <person name="Richardson P."/>
        </authorList>
    </citation>
    <scope>NUCLEOTIDE SEQUENCE [LARGE SCALE GENOMIC DNA]</scope>
    <source>
        <strain>BisB18</strain>
    </source>
</reference>
<evidence type="ECO:0000255" key="1">
    <source>
        <dbReference type="HAMAP-Rule" id="MF_00821"/>
    </source>
</evidence>
<sequence>MTNGNGAPPEAAQAPQLNVLAQYTKDLSFENPNAPASLAPQAQQPSINIQINVTANTLADSEFEVTLAIEGKADNAGSLIFSFELLYAGVFRILNVPKENLHPLVMIECPRLLFPFAREIIATAVRDGGFPPLMLDPVDFVGLYRQNMERQAAAAASADEAKPS</sequence>
<keyword id="KW-0143">Chaperone</keyword>
<keyword id="KW-0963">Cytoplasm</keyword>
<keyword id="KW-0653">Protein transport</keyword>
<keyword id="KW-0811">Translocation</keyword>
<keyword id="KW-0813">Transport</keyword>
<name>SECB_RHOPB</name>